<reference key="1">
    <citation type="submission" date="2002-09" db="EMBL/GenBank/DDBJ databases">
        <title>Molecular isolation of calcium-regulated genes involved in gravitropic bending of merit corn roots.</title>
        <authorList>
            <person name="Kim J.-Y."/>
            <person name="Poovaiah B.W."/>
        </authorList>
    </citation>
    <scope>NUCLEOTIDE SEQUENCE [MRNA]</scope>
    <source>
        <strain>cv. Merit</strain>
    </source>
</reference>
<organism>
    <name type="scientific">Zea mays</name>
    <name type="common">Maize</name>
    <dbReference type="NCBI Taxonomy" id="4577"/>
    <lineage>
        <taxon>Eukaryota</taxon>
        <taxon>Viridiplantae</taxon>
        <taxon>Streptophyta</taxon>
        <taxon>Embryophyta</taxon>
        <taxon>Tracheophyta</taxon>
        <taxon>Spermatophyta</taxon>
        <taxon>Magnoliopsida</taxon>
        <taxon>Liliopsida</taxon>
        <taxon>Poales</taxon>
        <taxon>Poaceae</taxon>
        <taxon>PACMAD clade</taxon>
        <taxon>Panicoideae</taxon>
        <taxon>Andropogonodae</taxon>
        <taxon>Andropogoneae</taxon>
        <taxon>Tripsacinae</taxon>
        <taxon>Zea</taxon>
    </lineage>
</organism>
<protein>
    <recommendedName>
        <fullName>Translationally-controlled tumor protein homolog</fullName>
        <shortName>TCTP</shortName>
    </recommendedName>
</protein>
<evidence type="ECO:0000250" key="1"/>
<evidence type="ECO:0000255" key="2">
    <source>
        <dbReference type="PROSITE-ProRule" id="PRU01133"/>
    </source>
</evidence>
<keyword id="KW-0106">Calcium</keyword>
<keyword id="KW-0963">Cytoplasm</keyword>
<keyword id="KW-1185">Reference proteome</keyword>
<dbReference type="EMBL" id="AF548024">
    <property type="protein sequence ID" value="AAN40686.1"/>
    <property type="molecule type" value="mRNA"/>
</dbReference>
<dbReference type="RefSeq" id="NP_001105104.1">
    <property type="nucleotide sequence ID" value="NM_001111634.1"/>
</dbReference>
<dbReference type="SMR" id="Q8H6A5"/>
<dbReference type="FunCoup" id="Q8H6A5">
    <property type="interactions" value="3153"/>
</dbReference>
<dbReference type="STRING" id="4577.Q8H6A5"/>
<dbReference type="PaxDb" id="4577-GRMZM2G108474_P02"/>
<dbReference type="GeneID" id="541981"/>
<dbReference type="KEGG" id="zma:541981"/>
<dbReference type="eggNOG" id="KOG1727">
    <property type="taxonomic scope" value="Eukaryota"/>
</dbReference>
<dbReference type="InParanoid" id="Q8H6A5"/>
<dbReference type="OrthoDB" id="10248936at2759"/>
<dbReference type="Proteomes" id="UP000007305">
    <property type="component" value="Unplaced"/>
</dbReference>
<dbReference type="ExpressionAtlas" id="Q8H6A5">
    <property type="expression patterns" value="baseline and differential"/>
</dbReference>
<dbReference type="GO" id="GO:0005737">
    <property type="term" value="C:cytoplasm"/>
    <property type="evidence" value="ECO:0000318"/>
    <property type="project" value="GO_Central"/>
</dbReference>
<dbReference type="GO" id="GO:0005509">
    <property type="term" value="F:calcium ion binding"/>
    <property type="evidence" value="ECO:0000318"/>
    <property type="project" value="GO_Central"/>
</dbReference>
<dbReference type="FunFam" id="2.170.150.10:FF:000003">
    <property type="entry name" value="Translationally-controlled tumor protein homolog"/>
    <property type="match status" value="1"/>
</dbReference>
<dbReference type="Gene3D" id="2.170.150.10">
    <property type="entry name" value="Metal Binding Protein, Guanine Nucleotide Exchange Factor, Chain A"/>
    <property type="match status" value="1"/>
</dbReference>
<dbReference type="InterPro" id="IPR011057">
    <property type="entry name" value="Mss4-like_sf"/>
</dbReference>
<dbReference type="InterPro" id="IPR011323">
    <property type="entry name" value="Mss4/transl-control_tumour"/>
</dbReference>
<dbReference type="InterPro" id="IPR034737">
    <property type="entry name" value="TCTP"/>
</dbReference>
<dbReference type="InterPro" id="IPR018103">
    <property type="entry name" value="Translation_control_tumour_CS"/>
</dbReference>
<dbReference type="InterPro" id="IPR018105">
    <property type="entry name" value="Translational_control_tumour_p"/>
</dbReference>
<dbReference type="PANTHER" id="PTHR11991">
    <property type="entry name" value="TRANSLATIONALLY CONTROLLED TUMOR PROTEIN-RELATED"/>
    <property type="match status" value="1"/>
</dbReference>
<dbReference type="PANTHER" id="PTHR11991:SF0">
    <property type="entry name" value="TRANSLATIONALLY-CONTROLLED TUMOR PROTEIN"/>
    <property type="match status" value="1"/>
</dbReference>
<dbReference type="Pfam" id="PF00838">
    <property type="entry name" value="TCTP"/>
    <property type="match status" value="1"/>
</dbReference>
<dbReference type="PRINTS" id="PR01653">
    <property type="entry name" value="TCTPROTEIN"/>
</dbReference>
<dbReference type="SUPFAM" id="SSF51316">
    <property type="entry name" value="Mss4-like"/>
    <property type="match status" value="1"/>
</dbReference>
<dbReference type="PROSITE" id="PS01002">
    <property type="entry name" value="TCTP_1"/>
    <property type="match status" value="1"/>
</dbReference>
<dbReference type="PROSITE" id="PS01003">
    <property type="entry name" value="TCTP_2"/>
    <property type="match status" value="1"/>
</dbReference>
<dbReference type="PROSITE" id="PS51797">
    <property type="entry name" value="TCTP_3"/>
    <property type="match status" value="1"/>
</dbReference>
<name>TCTP_MAIZE</name>
<feature type="chain" id="PRO_0000252315" description="Translationally-controlled tumor protein homolog">
    <location>
        <begin position="1"/>
        <end position="167"/>
    </location>
</feature>
<feature type="domain" description="TCTP" evidence="2">
    <location>
        <begin position="1"/>
        <end position="167"/>
    </location>
</feature>
<sequence>MLVYQDLLSGDELLSDSFTYKELENGVLWEVEGKWVTQGPVDVDIGANPSAEGGEDESVDDTAVKVVDIVDTFRLQEQPPFDKKSFVSYIKKYIKNLTAVLEPEKADEFKKGVEGATKFLLSKLKDLQFFVGESMKDDASVAFAYYKDGATNSTFLYFSHGLKEIKC</sequence>
<comment type="function">
    <text evidence="1">Involved in calcium binding and microtubule stabilization.</text>
</comment>
<comment type="subcellular location">
    <subcellularLocation>
        <location evidence="1">Cytoplasm</location>
    </subcellularLocation>
</comment>
<comment type="similarity">
    <text evidence="2">Belongs to the TCTP family.</text>
</comment>
<accession>Q8H6A5</accession>
<proteinExistence type="evidence at transcript level"/>
<gene>
    <name type="primary">TCTP</name>
</gene>